<organism>
    <name type="scientific">Streptococcus pyogenes serotype M5 (strain Manfredo)</name>
    <dbReference type="NCBI Taxonomy" id="160491"/>
    <lineage>
        <taxon>Bacteria</taxon>
        <taxon>Bacillati</taxon>
        <taxon>Bacillota</taxon>
        <taxon>Bacilli</taxon>
        <taxon>Lactobacillales</taxon>
        <taxon>Streptococcaceae</taxon>
        <taxon>Streptococcus</taxon>
    </lineage>
</organism>
<gene>
    <name type="ordered locus">SpyM51556</name>
</gene>
<sequence>MSTAIWILLLIVALGVGVFGGIFIARKQIEKEIGEHPRLTPEAIREMMSQMGQKPSEAKIQQTYRNIIKQSKAAVSKGKK</sequence>
<comment type="subcellular location">
    <subcellularLocation>
        <location evidence="1">Cell membrane</location>
        <topology evidence="1">Single-pass membrane protein</topology>
    </subcellularLocation>
</comment>
<comment type="similarity">
    <text evidence="1">Belongs to the UPF0154 family.</text>
</comment>
<feature type="chain" id="PRO_1000005645" description="UPF0154 protein SpyM51556">
    <location>
        <begin position="1"/>
        <end position="80"/>
    </location>
</feature>
<feature type="transmembrane region" description="Helical" evidence="1">
    <location>
        <begin position="4"/>
        <end position="24"/>
    </location>
</feature>
<name>Y1556_STRPG</name>
<dbReference type="EMBL" id="AM295007">
    <property type="protein sequence ID" value="CAM30877.1"/>
    <property type="molecule type" value="Genomic_DNA"/>
</dbReference>
<dbReference type="RefSeq" id="WP_002985908.1">
    <property type="nucleotide sequence ID" value="NC_009332.1"/>
</dbReference>
<dbReference type="SMR" id="A2RG98"/>
<dbReference type="KEGG" id="spf:SpyM51556"/>
<dbReference type="HOGENOM" id="CLU_180108_0_0_9"/>
<dbReference type="GO" id="GO:0005886">
    <property type="term" value="C:plasma membrane"/>
    <property type="evidence" value="ECO:0007669"/>
    <property type="project" value="UniProtKB-SubCell"/>
</dbReference>
<dbReference type="HAMAP" id="MF_00363">
    <property type="entry name" value="UPF0154"/>
    <property type="match status" value="1"/>
</dbReference>
<dbReference type="InterPro" id="IPR005359">
    <property type="entry name" value="UPF0154"/>
</dbReference>
<dbReference type="Pfam" id="PF03672">
    <property type="entry name" value="UPF0154"/>
    <property type="match status" value="1"/>
</dbReference>
<reference key="1">
    <citation type="journal article" date="2007" name="J. Bacteriol.">
        <title>Complete genome of acute rheumatic fever-associated serotype M5 Streptococcus pyogenes strain Manfredo.</title>
        <authorList>
            <person name="Holden M.T.G."/>
            <person name="Scott A."/>
            <person name="Cherevach I."/>
            <person name="Chillingworth T."/>
            <person name="Churcher C."/>
            <person name="Cronin A."/>
            <person name="Dowd L."/>
            <person name="Feltwell T."/>
            <person name="Hamlin N."/>
            <person name="Holroyd S."/>
            <person name="Jagels K."/>
            <person name="Moule S."/>
            <person name="Mungall K."/>
            <person name="Quail M.A."/>
            <person name="Price C."/>
            <person name="Rabbinowitsch E."/>
            <person name="Sharp S."/>
            <person name="Skelton J."/>
            <person name="Whitehead S."/>
            <person name="Barrell B.G."/>
            <person name="Kehoe M."/>
            <person name="Parkhill J."/>
        </authorList>
    </citation>
    <scope>NUCLEOTIDE SEQUENCE [LARGE SCALE GENOMIC DNA]</scope>
    <source>
        <strain>Manfredo</strain>
    </source>
</reference>
<keyword id="KW-1003">Cell membrane</keyword>
<keyword id="KW-0472">Membrane</keyword>
<keyword id="KW-0812">Transmembrane</keyword>
<keyword id="KW-1133">Transmembrane helix</keyword>
<proteinExistence type="inferred from homology"/>
<evidence type="ECO:0000255" key="1">
    <source>
        <dbReference type="HAMAP-Rule" id="MF_00363"/>
    </source>
</evidence>
<protein>
    <recommendedName>
        <fullName evidence="1">UPF0154 protein SpyM51556</fullName>
    </recommendedName>
</protein>
<accession>A2RG98</accession>